<feature type="chain" id="PRO_0000423631" description="Elongation factor G-2, mitochondrial">
    <location>
        <begin position="1"/>
        <end position="754"/>
    </location>
</feature>
<feature type="domain" description="tr-type G">
    <location>
        <begin position="63"/>
        <end position="340"/>
    </location>
</feature>
<feature type="binding site" evidence="1">
    <location>
        <begin position="72"/>
        <end position="79"/>
    </location>
    <ligand>
        <name>GTP</name>
        <dbReference type="ChEBI" id="CHEBI:37565"/>
    </ligand>
</feature>
<feature type="binding site" evidence="1">
    <location>
        <begin position="139"/>
        <end position="143"/>
    </location>
    <ligand>
        <name>GTP</name>
        <dbReference type="ChEBI" id="CHEBI:37565"/>
    </ligand>
</feature>
<feature type="binding site" evidence="1">
    <location>
        <begin position="193"/>
        <end position="196"/>
    </location>
    <ligand>
        <name>GTP</name>
        <dbReference type="ChEBI" id="CHEBI:37565"/>
    </ligand>
</feature>
<evidence type="ECO:0000255" key="1">
    <source>
        <dbReference type="HAMAP-Rule" id="MF_03061"/>
    </source>
</evidence>
<evidence type="ECO:0000269" key="2">
    <source>
    </source>
</evidence>
<evidence type="ECO:0000269" key="3">
    <source>
    </source>
</evidence>
<evidence type="ECO:0000305" key="4"/>
<accession>F4IW10</accession>
<dbReference type="EMBL" id="AC007659">
    <property type="status" value="NOT_ANNOTATED_CDS"/>
    <property type="molecule type" value="Genomic_DNA"/>
</dbReference>
<dbReference type="EMBL" id="CP002685">
    <property type="protein sequence ID" value="AEC10498.1"/>
    <property type="molecule type" value="Genomic_DNA"/>
</dbReference>
<dbReference type="RefSeq" id="NP_182029.1">
    <property type="nucleotide sequence ID" value="NM_130067.3"/>
</dbReference>
<dbReference type="SMR" id="F4IW10"/>
<dbReference type="BioGRID" id="4446">
    <property type="interactions" value="1"/>
</dbReference>
<dbReference type="FunCoup" id="F4IW10">
    <property type="interactions" value="3636"/>
</dbReference>
<dbReference type="STRING" id="3702.F4IW10"/>
<dbReference type="iPTMnet" id="F4IW10"/>
<dbReference type="PaxDb" id="3702-AT2G45030.1"/>
<dbReference type="ProteomicsDB" id="224745"/>
<dbReference type="EnsemblPlants" id="AT2G45030.1">
    <property type="protein sequence ID" value="AT2G45030.1"/>
    <property type="gene ID" value="AT2G45030"/>
</dbReference>
<dbReference type="GeneID" id="819110"/>
<dbReference type="Gramene" id="AT2G45030.1">
    <property type="protein sequence ID" value="AT2G45030.1"/>
    <property type="gene ID" value="AT2G45030"/>
</dbReference>
<dbReference type="KEGG" id="ath:AT2G45030"/>
<dbReference type="Araport" id="AT2G45030"/>
<dbReference type="TAIR" id="AT2G45030"/>
<dbReference type="eggNOG" id="KOG0465">
    <property type="taxonomic scope" value="Eukaryota"/>
</dbReference>
<dbReference type="HOGENOM" id="CLU_002794_4_0_1"/>
<dbReference type="InParanoid" id="F4IW10"/>
<dbReference type="OMA" id="EDARASX"/>
<dbReference type="OrthoDB" id="198619at2759"/>
<dbReference type="UniPathway" id="UPA00345"/>
<dbReference type="PRO" id="PR:F4IW10"/>
<dbReference type="Proteomes" id="UP000006548">
    <property type="component" value="Chromosome 2"/>
</dbReference>
<dbReference type="ExpressionAtlas" id="F4IW10">
    <property type="expression patterns" value="baseline and differential"/>
</dbReference>
<dbReference type="GO" id="GO:0005739">
    <property type="term" value="C:mitochondrion"/>
    <property type="evidence" value="ECO:0007005"/>
    <property type="project" value="TAIR"/>
</dbReference>
<dbReference type="GO" id="GO:0005525">
    <property type="term" value="F:GTP binding"/>
    <property type="evidence" value="ECO:0007669"/>
    <property type="project" value="UniProtKB-UniRule"/>
</dbReference>
<dbReference type="GO" id="GO:0003924">
    <property type="term" value="F:GTPase activity"/>
    <property type="evidence" value="ECO:0007669"/>
    <property type="project" value="UniProtKB-UniRule"/>
</dbReference>
<dbReference type="GO" id="GO:0003746">
    <property type="term" value="F:translation elongation factor activity"/>
    <property type="evidence" value="ECO:0007669"/>
    <property type="project" value="UniProtKB-UniRule"/>
</dbReference>
<dbReference type="GO" id="GO:0070125">
    <property type="term" value="P:mitochondrial translational elongation"/>
    <property type="evidence" value="ECO:0007669"/>
    <property type="project" value="UniProtKB-UniRule"/>
</dbReference>
<dbReference type="CDD" id="cd01886">
    <property type="entry name" value="EF-G"/>
    <property type="match status" value="1"/>
</dbReference>
<dbReference type="CDD" id="cd16262">
    <property type="entry name" value="EFG_III"/>
    <property type="match status" value="1"/>
</dbReference>
<dbReference type="CDD" id="cd01434">
    <property type="entry name" value="EFG_mtEFG1_IV"/>
    <property type="match status" value="1"/>
</dbReference>
<dbReference type="CDD" id="cd04097">
    <property type="entry name" value="mtEFG1_C"/>
    <property type="match status" value="1"/>
</dbReference>
<dbReference type="CDD" id="cd04091">
    <property type="entry name" value="mtEFG1_II_like"/>
    <property type="match status" value="1"/>
</dbReference>
<dbReference type="FunFam" id="3.30.230.10:FF:000003">
    <property type="entry name" value="Elongation factor G"/>
    <property type="match status" value="1"/>
</dbReference>
<dbReference type="FunFam" id="3.30.70.240:FF:000001">
    <property type="entry name" value="Elongation factor G"/>
    <property type="match status" value="1"/>
</dbReference>
<dbReference type="FunFam" id="3.30.70.870:FF:000001">
    <property type="entry name" value="Elongation factor G"/>
    <property type="match status" value="1"/>
</dbReference>
<dbReference type="FunFam" id="2.40.30.10:FF:000022">
    <property type="entry name" value="Elongation factor G, mitochondrial"/>
    <property type="match status" value="1"/>
</dbReference>
<dbReference type="FunFam" id="3.40.50.300:FF:000558">
    <property type="entry name" value="Elongation factor G, mitochondrial"/>
    <property type="match status" value="1"/>
</dbReference>
<dbReference type="Gene3D" id="3.30.230.10">
    <property type="match status" value="1"/>
</dbReference>
<dbReference type="Gene3D" id="3.30.70.240">
    <property type="match status" value="1"/>
</dbReference>
<dbReference type="Gene3D" id="3.30.70.870">
    <property type="entry name" value="Elongation Factor G (Translational Gtpase), domain 3"/>
    <property type="match status" value="1"/>
</dbReference>
<dbReference type="Gene3D" id="3.40.50.300">
    <property type="entry name" value="P-loop containing nucleotide triphosphate hydrolases"/>
    <property type="match status" value="1"/>
</dbReference>
<dbReference type="Gene3D" id="2.40.30.10">
    <property type="entry name" value="Translation factors"/>
    <property type="match status" value="1"/>
</dbReference>
<dbReference type="HAMAP" id="MF_00054_B">
    <property type="entry name" value="EF_G_EF_2_B"/>
    <property type="match status" value="1"/>
</dbReference>
<dbReference type="InterPro" id="IPR041095">
    <property type="entry name" value="EFG_II"/>
</dbReference>
<dbReference type="InterPro" id="IPR009022">
    <property type="entry name" value="EFG_III"/>
</dbReference>
<dbReference type="InterPro" id="IPR035647">
    <property type="entry name" value="EFG_III/V"/>
</dbReference>
<dbReference type="InterPro" id="IPR047872">
    <property type="entry name" value="EFG_IV"/>
</dbReference>
<dbReference type="InterPro" id="IPR035649">
    <property type="entry name" value="EFG_V"/>
</dbReference>
<dbReference type="InterPro" id="IPR000640">
    <property type="entry name" value="EFG_V-like"/>
</dbReference>
<dbReference type="InterPro" id="IPR004161">
    <property type="entry name" value="EFTu-like_2"/>
</dbReference>
<dbReference type="InterPro" id="IPR031157">
    <property type="entry name" value="G_TR_CS"/>
</dbReference>
<dbReference type="InterPro" id="IPR027417">
    <property type="entry name" value="P-loop_NTPase"/>
</dbReference>
<dbReference type="InterPro" id="IPR020568">
    <property type="entry name" value="Ribosomal_Su5_D2-typ_SF"/>
</dbReference>
<dbReference type="InterPro" id="IPR014721">
    <property type="entry name" value="Ribsml_uS5_D2-typ_fold_subgr"/>
</dbReference>
<dbReference type="InterPro" id="IPR005225">
    <property type="entry name" value="Small_GTP-bd"/>
</dbReference>
<dbReference type="InterPro" id="IPR000795">
    <property type="entry name" value="T_Tr_GTP-bd_dom"/>
</dbReference>
<dbReference type="InterPro" id="IPR009000">
    <property type="entry name" value="Transl_B-barrel_sf"/>
</dbReference>
<dbReference type="InterPro" id="IPR004540">
    <property type="entry name" value="Transl_elong_EFG/EF2"/>
</dbReference>
<dbReference type="InterPro" id="IPR005517">
    <property type="entry name" value="Transl_elong_EFG/EF2_IV"/>
</dbReference>
<dbReference type="NCBIfam" id="TIGR00484">
    <property type="entry name" value="EF-G"/>
    <property type="match status" value="1"/>
</dbReference>
<dbReference type="NCBIfam" id="NF009381">
    <property type="entry name" value="PRK12740.1-5"/>
    <property type="match status" value="1"/>
</dbReference>
<dbReference type="NCBIfam" id="TIGR00231">
    <property type="entry name" value="small_GTP"/>
    <property type="match status" value="1"/>
</dbReference>
<dbReference type="PANTHER" id="PTHR43636">
    <property type="entry name" value="ELONGATION FACTOR G, MITOCHONDRIAL"/>
    <property type="match status" value="1"/>
</dbReference>
<dbReference type="PANTHER" id="PTHR43636:SF2">
    <property type="entry name" value="ELONGATION FACTOR G, MITOCHONDRIAL"/>
    <property type="match status" value="1"/>
</dbReference>
<dbReference type="Pfam" id="PF00679">
    <property type="entry name" value="EFG_C"/>
    <property type="match status" value="1"/>
</dbReference>
<dbReference type="Pfam" id="PF14492">
    <property type="entry name" value="EFG_III"/>
    <property type="match status" value="1"/>
</dbReference>
<dbReference type="Pfam" id="PF03764">
    <property type="entry name" value="EFG_IV"/>
    <property type="match status" value="1"/>
</dbReference>
<dbReference type="Pfam" id="PF00009">
    <property type="entry name" value="GTP_EFTU"/>
    <property type="match status" value="1"/>
</dbReference>
<dbReference type="Pfam" id="PF03144">
    <property type="entry name" value="GTP_EFTU_D2"/>
    <property type="match status" value="1"/>
</dbReference>
<dbReference type="PRINTS" id="PR00315">
    <property type="entry name" value="ELONGATNFCT"/>
</dbReference>
<dbReference type="SMART" id="SM00838">
    <property type="entry name" value="EFG_C"/>
    <property type="match status" value="1"/>
</dbReference>
<dbReference type="SMART" id="SM00889">
    <property type="entry name" value="EFG_IV"/>
    <property type="match status" value="1"/>
</dbReference>
<dbReference type="SUPFAM" id="SSF54980">
    <property type="entry name" value="EF-G C-terminal domain-like"/>
    <property type="match status" value="2"/>
</dbReference>
<dbReference type="SUPFAM" id="SSF52540">
    <property type="entry name" value="P-loop containing nucleoside triphosphate hydrolases"/>
    <property type="match status" value="1"/>
</dbReference>
<dbReference type="SUPFAM" id="SSF54211">
    <property type="entry name" value="Ribosomal protein S5 domain 2-like"/>
    <property type="match status" value="1"/>
</dbReference>
<dbReference type="SUPFAM" id="SSF50447">
    <property type="entry name" value="Translation proteins"/>
    <property type="match status" value="1"/>
</dbReference>
<dbReference type="PROSITE" id="PS00301">
    <property type="entry name" value="G_TR_1"/>
    <property type="match status" value="1"/>
</dbReference>
<dbReference type="PROSITE" id="PS51722">
    <property type="entry name" value="G_TR_2"/>
    <property type="match status" value="1"/>
</dbReference>
<organism>
    <name type="scientific">Arabidopsis thaliana</name>
    <name type="common">Mouse-ear cress</name>
    <dbReference type="NCBI Taxonomy" id="3702"/>
    <lineage>
        <taxon>Eukaryota</taxon>
        <taxon>Viridiplantae</taxon>
        <taxon>Streptophyta</taxon>
        <taxon>Embryophyta</taxon>
        <taxon>Tracheophyta</taxon>
        <taxon>Spermatophyta</taxon>
        <taxon>Magnoliopsida</taxon>
        <taxon>eudicotyledons</taxon>
        <taxon>Gunneridae</taxon>
        <taxon>Pentapetalae</taxon>
        <taxon>rosids</taxon>
        <taxon>malvids</taxon>
        <taxon>Brassicales</taxon>
        <taxon>Brassicaceae</taxon>
        <taxon>Camelineae</taxon>
        <taxon>Arabidopsis</taxon>
    </lineage>
</organism>
<name>EFGM2_ARATH</name>
<sequence length="754" mass="83112">MARFPTSPAPNLLLRLFSSNKRASSPTAALLTGDFHLIRHFSAGTAARAVKDEKEPWWKESMDKLRNIGISAHIDSGKTTLTERVLFYTGRIHEIHEVRGRDGVGAKMDSMDLEREKGITIQSAATYCTWKDYKVNIIDTPGHVDFTIEVERALRVLDGAILVLCSVGGVQSQSITVDRQMRRYEVPRVAFINKLDRMGADPWKVLNQARAKLRHHSAAVQVPIGLEENFQGLIDLIHVKAYFFHGSSGENVVAGDIPADMEGLVGDKRRELIETVSEVDDVLAEKFLNDEPVSAAELEEAIRRATIAQKFVPVFMGSAFKNKGVQPLLDGVVSFLPSPNEVNNYALDQNNNEERVTLTGSPDGPLVALAFKLEEGRFGQLTYLRVYEGVIKKGDFIINVNTGKRIKVPRLVRMHSNDMEDIQEAHAGQIVAVFGIECASGDTFTDGSVKYTMTSMNVPEPVMSLAVQPVSKDSGGQFSKALNRFQKEDPTFRVGLDPESGQTIISGMGELHLDIYVERMRREYKVDATVGKPRVNFRETITQRAEFDYLHKKQSGGAGQYGRVTGYVEPLPPGSKEKFEFENMIVGQAIPSGFIPAIEKGFKEAANSGSLIGHPVENLRIVLTDGASHAVDSSELAFKMAAIYAFRLCYTAARPVILEPVMLVELKVPTEFQGTVAGDINKRKGIIVGNDQEGDDSVITANVPLNNMFGYSTSLRSMTQGKGEFTMEYKEHSAVSNEVQAQLVNAYSASKATE</sequence>
<protein>
    <recommendedName>
        <fullName>Elongation factor G-2, mitochondrial</fullName>
        <shortName evidence="1">EF-Gmt</shortName>
        <shortName evidence="1">mEF-G 1-2</shortName>
    </recommendedName>
    <alternativeName>
        <fullName evidence="1">Elongation factor G1-2</fullName>
    </alternativeName>
</protein>
<comment type="function">
    <text evidence="1">Mitochondrial GTPase that catalyzes the GTP-dependent ribosomal translocation step during translation elongation. During this step, the ribosome changes from the pre-translocational (PRE) to the post-translocational (POST) state as the newly formed A-site-bound peptidyl-tRNA and P-site-bound deacylated tRNA move to the P and E sites, respectively. Catalyzes the coordinated movement of the two tRNA molecules, the mRNA and conformational changes in the ribosome.</text>
</comment>
<comment type="pathway">
    <text evidence="1">Protein biosynthesis; polypeptide chain elongation.</text>
</comment>
<comment type="subcellular location">
    <subcellularLocation>
        <location evidence="1 2">Mitochondrion</location>
    </subcellularLocation>
</comment>
<comment type="tissue specificity">
    <text evidence="3">Expressed in cotyledons and adult leaves at the same levels.</text>
</comment>
<comment type="miscellaneous">
    <text evidence="1">This protein may be expected to contain an N-terminal transit peptide but none has been predicted.</text>
</comment>
<comment type="similarity">
    <text evidence="4">Belongs to the TRAFAC class translation factor GTPase superfamily. Classic translation factor GTPase family. EF-G/EF-2 subfamily.</text>
</comment>
<reference key="1">
    <citation type="journal article" date="1999" name="Nature">
        <title>Sequence and analysis of chromosome 2 of the plant Arabidopsis thaliana.</title>
        <authorList>
            <person name="Lin X."/>
            <person name="Kaul S."/>
            <person name="Rounsley S.D."/>
            <person name="Shea T.P."/>
            <person name="Benito M.-I."/>
            <person name="Town C.D."/>
            <person name="Fujii C.Y."/>
            <person name="Mason T.M."/>
            <person name="Bowman C.L."/>
            <person name="Barnstead M.E."/>
            <person name="Feldblyum T.V."/>
            <person name="Buell C.R."/>
            <person name="Ketchum K.A."/>
            <person name="Lee J.J."/>
            <person name="Ronning C.M."/>
            <person name="Koo H.L."/>
            <person name="Moffat K.S."/>
            <person name="Cronin L.A."/>
            <person name="Shen M."/>
            <person name="Pai G."/>
            <person name="Van Aken S."/>
            <person name="Umayam L."/>
            <person name="Tallon L.J."/>
            <person name="Gill J.E."/>
            <person name="Adams M.D."/>
            <person name="Carrera A.J."/>
            <person name="Creasy T.H."/>
            <person name="Goodman H.M."/>
            <person name="Somerville C.R."/>
            <person name="Copenhaver G.P."/>
            <person name="Preuss D."/>
            <person name="Nierman W.C."/>
            <person name="White O."/>
            <person name="Eisen J.A."/>
            <person name="Salzberg S.L."/>
            <person name="Fraser C.M."/>
            <person name="Venter J.C."/>
        </authorList>
    </citation>
    <scope>NUCLEOTIDE SEQUENCE [LARGE SCALE GENOMIC DNA]</scope>
    <source>
        <strain>cv. Columbia</strain>
    </source>
</reference>
<reference key="2">
    <citation type="journal article" date="2017" name="Plant J.">
        <title>Araport11: a complete reannotation of the Arabidopsis thaliana reference genome.</title>
        <authorList>
            <person name="Cheng C.Y."/>
            <person name="Krishnakumar V."/>
            <person name="Chan A.P."/>
            <person name="Thibaud-Nissen F."/>
            <person name="Schobel S."/>
            <person name="Town C.D."/>
        </authorList>
    </citation>
    <scope>GENOME REANNOTATION</scope>
    <source>
        <strain>cv. Columbia</strain>
    </source>
</reference>
<reference key="3">
    <citation type="journal article" date="2004" name="Plant Cell">
        <title>Experimental analysis of the Arabidopsis mitochondrial proteome highlights signaling and regulatory components, provides assessment of targeting prediction programs, and indicates plant-specific mitochondrial proteins.</title>
        <authorList>
            <person name="Heazlewood J.L."/>
            <person name="Tonti-Filippini J.S."/>
            <person name="Gout A.M."/>
            <person name="Day D.A."/>
            <person name="Whelan J."/>
            <person name="Millar A.H."/>
        </authorList>
    </citation>
    <scope>IDENTIFICATION BY MASS SPECTROMETRY</scope>
    <scope>SUBCELLULAR LOCATION [LARGE SCALE ANALYSIS]</scope>
    <source>
        <strain>cv. Landsberg erecta</strain>
    </source>
</reference>
<reference key="4">
    <citation type="journal article" date="2007" name="BMC Plant Biol.">
        <title>Mutations in a plastid-localized elongation factor G alter early stages of plastid development in Arabidopsis thaliana.</title>
        <authorList>
            <person name="Ruppel N.J."/>
            <person name="Hangarter R.P."/>
        </authorList>
    </citation>
    <scope>GENE FAMILY</scope>
    <scope>TISSUE SPECIFICITY</scope>
</reference>
<proteinExistence type="evidence at protein level"/>
<keyword id="KW-0251">Elongation factor</keyword>
<keyword id="KW-0342">GTP-binding</keyword>
<keyword id="KW-0496">Mitochondrion</keyword>
<keyword id="KW-0547">Nucleotide-binding</keyword>
<keyword id="KW-0648">Protein biosynthesis</keyword>
<keyword id="KW-1185">Reference proteome</keyword>
<gene>
    <name type="primary">MEFG2</name>
    <name type="ordered locus">At2g45030</name>
    <name type="ORF">T14P1.16</name>
</gene>